<comment type="function">
    <text evidence="2">Component of the ubiquinol-cytochrome c reductase complex (complex III or cytochrome b-c1 complex) that is part of the mitochondrial respiratory chain. The b-c1 complex mediates electron transfer from ubiquinol to cytochrome c. Contributes to the generation of a proton gradient across the mitochondrial membrane that is then used for ATP synthesis.</text>
</comment>
<comment type="cofactor">
    <cofactor evidence="2">
        <name>heme b</name>
        <dbReference type="ChEBI" id="CHEBI:60344"/>
    </cofactor>
    <text evidence="2">Binds 2 heme b groups non-covalently.</text>
</comment>
<comment type="subunit">
    <text evidence="2">The cytochrome bc1 complex contains 11 subunits: 3 respiratory subunits (MT-CYB, CYC1 and UQCRFS1), 2 core proteins (UQCRC1 and UQCRC2) and 6 low-molecular weight proteins (UQCRH/QCR6, UQCRB/QCR7, UQCRQ/QCR8, UQCR10/QCR9, UQCR11/QCR10 and a cleavage product of UQCRFS1). This cytochrome bc1 complex then forms a dimer.</text>
</comment>
<comment type="subcellular location">
    <subcellularLocation>
        <location evidence="2">Mitochondrion inner membrane</location>
        <topology evidence="2">Multi-pass membrane protein</topology>
    </subcellularLocation>
</comment>
<comment type="miscellaneous">
    <text evidence="1">Heme 1 (or BL or b562) is low-potential and absorbs at about 562 nm, and heme 2 (or BH or b566) is high-potential and absorbs at about 566 nm.</text>
</comment>
<comment type="similarity">
    <text evidence="3 4">Belongs to the cytochrome b family.</text>
</comment>
<comment type="caution">
    <text evidence="2">The full-length protein contains only eight transmembrane helices, not nine as predicted by bioinformatics tools.</text>
</comment>
<keyword id="KW-0249">Electron transport</keyword>
<keyword id="KW-0349">Heme</keyword>
<keyword id="KW-0408">Iron</keyword>
<keyword id="KW-0472">Membrane</keyword>
<keyword id="KW-0479">Metal-binding</keyword>
<keyword id="KW-0496">Mitochondrion</keyword>
<keyword id="KW-0999">Mitochondrion inner membrane</keyword>
<keyword id="KW-0679">Respiratory chain</keyword>
<keyword id="KW-0812">Transmembrane</keyword>
<keyword id="KW-1133">Transmembrane helix</keyword>
<keyword id="KW-0813">Transport</keyword>
<keyword id="KW-0830">Ubiquinone</keyword>
<reference key="1">
    <citation type="journal article" date="2004" name="Mol. Phylogenet. Evol.">
        <title>Evolution and phylogeny of old world deer.</title>
        <authorList>
            <person name="Pitra C."/>
            <person name="Fickel J."/>
            <person name="Meijaard E."/>
            <person name="Groves P.C."/>
        </authorList>
    </citation>
    <scope>NUCLEOTIDE SEQUENCE [GENOMIC DNA]</scope>
</reference>
<protein>
    <recommendedName>
        <fullName>Cytochrome b</fullName>
    </recommendedName>
    <alternativeName>
        <fullName>Complex III subunit 3</fullName>
    </alternativeName>
    <alternativeName>
        <fullName>Complex III subunit III</fullName>
    </alternativeName>
    <alternativeName>
        <fullName>Cytochrome b-c1 complex subunit 3</fullName>
    </alternativeName>
    <alternativeName>
        <fullName>Ubiquinol-cytochrome-c reductase complex cytochrome b subunit</fullName>
    </alternativeName>
</protein>
<name>CYB_RUCSC</name>
<sequence length="379" mass="42917">MINIRKTHPLMKIVNNAFIDLPAPSNISSWWNFGSLLGICLILQILTGLFLAMHYTSDTMTAFSSVTHICRDVNYGWIIRYMHANGASMFFICLFMHVGRGLYYGSYTFLETWNIGVILLFTVMATAFVGYVLPWGQMSFWGATVITNLLSAIPYIGTNLVEWIWGGFSVDKATLTRFFAFHFILPFIIAALAMVHLLFLHETGSNNPTGIPSDADKIPFYPYYTIKDILGILLLILFLMLLVLFAPDLLGDPDNYTPANPLNTPPHIKPEWYFLFAYAILRSIPNKLGGVLALVSSILILILMPLLHTSKQRSMMFRPFSQCLFWVLVADLLTLTWIGGQPVEYPFIIIGQLASILYFFIILVLMPITSTIENNLLKW</sequence>
<proteinExistence type="inferred from homology"/>
<accession>Q5UVI8</accession>
<dbReference type="EMBL" id="AY607036">
    <property type="protein sequence ID" value="AAU08746.1"/>
    <property type="molecule type" value="Genomic_DNA"/>
</dbReference>
<dbReference type="SMR" id="Q5UVI8"/>
<dbReference type="GO" id="GO:0005743">
    <property type="term" value="C:mitochondrial inner membrane"/>
    <property type="evidence" value="ECO:0007669"/>
    <property type="project" value="UniProtKB-SubCell"/>
</dbReference>
<dbReference type="GO" id="GO:0045275">
    <property type="term" value="C:respiratory chain complex III"/>
    <property type="evidence" value="ECO:0007669"/>
    <property type="project" value="InterPro"/>
</dbReference>
<dbReference type="GO" id="GO:0046872">
    <property type="term" value="F:metal ion binding"/>
    <property type="evidence" value="ECO:0007669"/>
    <property type="project" value="UniProtKB-KW"/>
</dbReference>
<dbReference type="GO" id="GO:0008121">
    <property type="term" value="F:ubiquinol-cytochrome-c reductase activity"/>
    <property type="evidence" value="ECO:0007669"/>
    <property type="project" value="InterPro"/>
</dbReference>
<dbReference type="GO" id="GO:0006122">
    <property type="term" value="P:mitochondrial electron transport, ubiquinol to cytochrome c"/>
    <property type="evidence" value="ECO:0007669"/>
    <property type="project" value="TreeGrafter"/>
</dbReference>
<dbReference type="CDD" id="cd00290">
    <property type="entry name" value="cytochrome_b_C"/>
    <property type="match status" value="1"/>
</dbReference>
<dbReference type="CDD" id="cd00284">
    <property type="entry name" value="Cytochrome_b_N"/>
    <property type="match status" value="1"/>
</dbReference>
<dbReference type="FunFam" id="1.20.810.10:FF:000002">
    <property type="entry name" value="Cytochrome b"/>
    <property type="match status" value="1"/>
</dbReference>
<dbReference type="Gene3D" id="1.20.810.10">
    <property type="entry name" value="Cytochrome Bc1 Complex, Chain C"/>
    <property type="match status" value="1"/>
</dbReference>
<dbReference type="InterPro" id="IPR005798">
    <property type="entry name" value="Cyt_b/b6_C"/>
</dbReference>
<dbReference type="InterPro" id="IPR036150">
    <property type="entry name" value="Cyt_b/b6_C_sf"/>
</dbReference>
<dbReference type="InterPro" id="IPR005797">
    <property type="entry name" value="Cyt_b/b6_N"/>
</dbReference>
<dbReference type="InterPro" id="IPR027387">
    <property type="entry name" value="Cytb/b6-like_sf"/>
</dbReference>
<dbReference type="InterPro" id="IPR030689">
    <property type="entry name" value="Cytochrome_b"/>
</dbReference>
<dbReference type="InterPro" id="IPR048260">
    <property type="entry name" value="Cytochrome_b_C_euk/bac"/>
</dbReference>
<dbReference type="InterPro" id="IPR048259">
    <property type="entry name" value="Cytochrome_b_N_euk/bac"/>
</dbReference>
<dbReference type="InterPro" id="IPR016174">
    <property type="entry name" value="Di-haem_cyt_TM"/>
</dbReference>
<dbReference type="PANTHER" id="PTHR19271">
    <property type="entry name" value="CYTOCHROME B"/>
    <property type="match status" value="1"/>
</dbReference>
<dbReference type="PANTHER" id="PTHR19271:SF16">
    <property type="entry name" value="CYTOCHROME B"/>
    <property type="match status" value="1"/>
</dbReference>
<dbReference type="Pfam" id="PF00032">
    <property type="entry name" value="Cytochrom_B_C"/>
    <property type="match status" value="1"/>
</dbReference>
<dbReference type="Pfam" id="PF00033">
    <property type="entry name" value="Cytochrome_B"/>
    <property type="match status" value="1"/>
</dbReference>
<dbReference type="PIRSF" id="PIRSF038885">
    <property type="entry name" value="COB"/>
    <property type="match status" value="1"/>
</dbReference>
<dbReference type="SUPFAM" id="SSF81648">
    <property type="entry name" value="a domain/subunit of cytochrome bc1 complex (Ubiquinol-cytochrome c reductase)"/>
    <property type="match status" value="1"/>
</dbReference>
<dbReference type="SUPFAM" id="SSF81342">
    <property type="entry name" value="Transmembrane di-heme cytochromes"/>
    <property type="match status" value="1"/>
</dbReference>
<dbReference type="PROSITE" id="PS51003">
    <property type="entry name" value="CYTB_CTER"/>
    <property type="match status" value="1"/>
</dbReference>
<dbReference type="PROSITE" id="PS51002">
    <property type="entry name" value="CYTB_NTER"/>
    <property type="match status" value="1"/>
</dbReference>
<organism>
    <name type="scientific">Rucervus schomburgki</name>
    <name type="common">Schomburgk's deer</name>
    <name type="synonym">Cervus schomburgki</name>
    <dbReference type="NCBI Taxonomy" id="291354"/>
    <lineage>
        <taxon>Eukaryota</taxon>
        <taxon>Metazoa</taxon>
        <taxon>Chordata</taxon>
        <taxon>Craniata</taxon>
        <taxon>Vertebrata</taxon>
        <taxon>Euteleostomi</taxon>
        <taxon>Mammalia</taxon>
        <taxon>Eutheria</taxon>
        <taxon>Laurasiatheria</taxon>
        <taxon>Artiodactyla</taxon>
        <taxon>Ruminantia</taxon>
        <taxon>Pecora</taxon>
        <taxon>Cervidae</taxon>
        <taxon>Cervinae</taxon>
        <taxon>Rucervus</taxon>
    </lineage>
</organism>
<gene>
    <name type="primary">MT-CYB</name>
    <name type="synonym">COB</name>
    <name type="synonym">CYTB</name>
    <name type="synonym">MTCYB</name>
</gene>
<feature type="chain" id="PRO_0000060767" description="Cytochrome b">
    <location>
        <begin position="1"/>
        <end position="379"/>
    </location>
</feature>
<feature type="transmembrane region" description="Helical" evidence="2">
    <location>
        <begin position="33"/>
        <end position="53"/>
    </location>
</feature>
<feature type="transmembrane region" description="Helical" evidence="2">
    <location>
        <begin position="77"/>
        <end position="98"/>
    </location>
</feature>
<feature type="transmembrane region" description="Helical" evidence="2">
    <location>
        <begin position="113"/>
        <end position="133"/>
    </location>
</feature>
<feature type="transmembrane region" description="Helical" evidence="2">
    <location>
        <begin position="178"/>
        <end position="198"/>
    </location>
</feature>
<feature type="transmembrane region" description="Helical" evidence="2">
    <location>
        <begin position="226"/>
        <end position="246"/>
    </location>
</feature>
<feature type="transmembrane region" description="Helical" evidence="2">
    <location>
        <begin position="288"/>
        <end position="308"/>
    </location>
</feature>
<feature type="transmembrane region" description="Helical" evidence="2">
    <location>
        <begin position="320"/>
        <end position="340"/>
    </location>
</feature>
<feature type="transmembrane region" description="Helical" evidence="2">
    <location>
        <begin position="347"/>
        <end position="367"/>
    </location>
</feature>
<feature type="binding site" description="axial binding residue" evidence="2">
    <location>
        <position position="83"/>
    </location>
    <ligand>
        <name>heme b</name>
        <dbReference type="ChEBI" id="CHEBI:60344"/>
        <label>b562</label>
    </ligand>
    <ligandPart>
        <name>Fe</name>
        <dbReference type="ChEBI" id="CHEBI:18248"/>
    </ligandPart>
</feature>
<feature type="binding site" description="axial binding residue" evidence="2">
    <location>
        <position position="97"/>
    </location>
    <ligand>
        <name>heme b</name>
        <dbReference type="ChEBI" id="CHEBI:60344"/>
        <label>b566</label>
    </ligand>
    <ligandPart>
        <name>Fe</name>
        <dbReference type="ChEBI" id="CHEBI:18248"/>
    </ligandPart>
</feature>
<feature type="binding site" description="axial binding residue" evidence="2">
    <location>
        <position position="182"/>
    </location>
    <ligand>
        <name>heme b</name>
        <dbReference type="ChEBI" id="CHEBI:60344"/>
        <label>b562</label>
    </ligand>
    <ligandPart>
        <name>Fe</name>
        <dbReference type="ChEBI" id="CHEBI:18248"/>
    </ligandPart>
</feature>
<feature type="binding site" description="axial binding residue" evidence="2">
    <location>
        <position position="196"/>
    </location>
    <ligand>
        <name>heme b</name>
        <dbReference type="ChEBI" id="CHEBI:60344"/>
        <label>b566</label>
    </ligand>
    <ligandPart>
        <name>Fe</name>
        <dbReference type="ChEBI" id="CHEBI:18248"/>
    </ligandPart>
</feature>
<feature type="binding site" evidence="2">
    <location>
        <position position="201"/>
    </location>
    <ligand>
        <name>a ubiquinone</name>
        <dbReference type="ChEBI" id="CHEBI:16389"/>
    </ligand>
</feature>
<evidence type="ECO:0000250" key="1"/>
<evidence type="ECO:0000250" key="2">
    <source>
        <dbReference type="UniProtKB" id="P00157"/>
    </source>
</evidence>
<evidence type="ECO:0000255" key="3">
    <source>
        <dbReference type="PROSITE-ProRule" id="PRU00967"/>
    </source>
</evidence>
<evidence type="ECO:0000255" key="4">
    <source>
        <dbReference type="PROSITE-ProRule" id="PRU00968"/>
    </source>
</evidence>
<geneLocation type="mitochondrion"/>